<organism>
    <name type="scientific">Enterobacteria phage T4</name>
    <name type="common">Bacteriophage T4</name>
    <dbReference type="NCBI Taxonomy" id="10665"/>
    <lineage>
        <taxon>Viruses</taxon>
        <taxon>Duplodnaviria</taxon>
        <taxon>Heunggongvirae</taxon>
        <taxon>Uroviricota</taxon>
        <taxon>Caudoviricetes</taxon>
        <taxon>Straboviridae</taxon>
        <taxon>Tevenvirinae</taxon>
        <taxon>Tequatrovirus</taxon>
    </lineage>
</organism>
<organismHost>
    <name type="scientific">Escherichia coli</name>
    <dbReference type="NCBI Taxonomy" id="562"/>
</organismHost>
<name>FIB35_BPT4</name>
<gene>
    <name type="primary">35</name>
</gene>
<accession>P03742</accession>
<accession>P39509</accession>
<accession>Q9T0T1</accession>
<feature type="chain" id="PRO_0000165021" description="Long-tail fiber protein gp35">
    <location>
        <begin position="1"/>
        <end position="372"/>
    </location>
</feature>
<feature type="domain" description="GG-type lectin" evidence="1">
    <location>
        <begin position="22"/>
        <end position="193"/>
    </location>
</feature>
<evidence type="ECO:0000255" key="1">
    <source>
        <dbReference type="PROSITE-ProRule" id="PRU01375"/>
    </source>
</evidence>
<evidence type="ECO:0000269" key="2">
    <source>
    </source>
</evidence>
<evidence type="ECO:0000305" key="3"/>
<keyword id="KW-0945">Host-virus interaction</keyword>
<keyword id="KW-0426">Late protein</keyword>
<keyword id="KW-0430">Lectin</keyword>
<keyword id="KW-1185">Reference proteome</keyword>
<keyword id="KW-1233">Viral attachment to host adhesion receptor</keyword>
<keyword id="KW-1161">Viral attachment to host cell</keyword>
<keyword id="KW-1230">Viral tail fiber protein</keyword>
<keyword id="KW-1227">Viral tail protein</keyword>
<keyword id="KW-0946">Virion</keyword>
<keyword id="KW-1160">Virus entry into host cell</keyword>
<reference key="1">
    <citation type="journal article" date="2003" name="Microbiol. Mol. Biol. Rev.">
        <title>Bacteriophage T4 genome.</title>
        <authorList>
            <person name="Miller E.S."/>
            <person name="Kutter E."/>
            <person name="Mosig G."/>
            <person name="Arisaka F."/>
            <person name="Kunisawa T."/>
            <person name="Ruger W."/>
        </authorList>
    </citation>
    <scope>NUCLEOTIDE SEQUENCE [LARGE SCALE GENOMIC DNA]</scope>
</reference>
<reference key="2">
    <citation type="journal article" date="1981" name="J. Mol. Biol.">
        <title>DNA sequence of the tail fibre genes 36 and 37 of bacteriophage T4.</title>
        <authorList>
            <person name="Oliver D.B."/>
            <person name="Crowther R.A."/>
        </authorList>
    </citation>
    <scope>NUCLEOTIDE SEQUENCE [GENOMIC DNA] OF 315-372</scope>
</reference>
<reference key="3">
    <citation type="journal article" date="1996" name="J. Mol. Biol.">
        <title>Stoichiometry and domainal organization of the long tail-fiber of bacteriophage T4: a hinged viral adhesin.</title>
        <authorList>
            <person name="Cerritelli M.E."/>
            <person name="Wall J.S."/>
            <person name="Simon M.N."/>
            <person name="Conway J.F."/>
            <person name="Steven A.C."/>
        </authorList>
    </citation>
    <scope>FUNCTION</scope>
    <scope>SUBUNIT</scope>
</reference>
<dbReference type="EMBL" id="AF158101">
    <property type="protein sequence ID" value="AAD42458.1"/>
    <property type="molecule type" value="Genomic_DNA"/>
</dbReference>
<dbReference type="EMBL" id="J02509">
    <property type="protein sequence ID" value="AAA32512.1"/>
    <property type="molecule type" value="Genomic_DNA"/>
</dbReference>
<dbReference type="PIR" id="JT0577">
    <property type="entry name" value="TLBP54"/>
</dbReference>
<dbReference type="RefSeq" id="NP_049861.1">
    <property type="nucleotide sequence ID" value="NC_000866.4"/>
</dbReference>
<dbReference type="SMR" id="P03742"/>
<dbReference type="GeneID" id="1258683"/>
<dbReference type="KEGG" id="vg:1258683"/>
<dbReference type="OrthoDB" id="3762at10239"/>
<dbReference type="Proteomes" id="UP000009087">
    <property type="component" value="Segment"/>
</dbReference>
<dbReference type="GO" id="GO:0098024">
    <property type="term" value="C:virus tail, fiber"/>
    <property type="evidence" value="ECO:0007669"/>
    <property type="project" value="UniProtKB-KW"/>
</dbReference>
<dbReference type="GO" id="GO:0030246">
    <property type="term" value="F:carbohydrate binding"/>
    <property type="evidence" value="ECO:0007669"/>
    <property type="project" value="UniProtKB-KW"/>
</dbReference>
<dbReference type="GO" id="GO:0098671">
    <property type="term" value="P:adhesion receptor-mediated virion attachment to host cell"/>
    <property type="evidence" value="ECO:0007669"/>
    <property type="project" value="UniProtKB-KW"/>
</dbReference>
<dbReference type="GO" id="GO:0046718">
    <property type="term" value="P:symbiont entry into host cell"/>
    <property type="evidence" value="ECO:0007669"/>
    <property type="project" value="UniProtKB-KW"/>
</dbReference>
<dbReference type="InterPro" id="IPR039477">
    <property type="entry name" value="ILEI/PANDER_dom"/>
</dbReference>
<dbReference type="Pfam" id="PF15711">
    <property type="entry name" value="ILEI"/>
    <property type="match status" value="1"/>
</dbReference>
<dbReference type="PROSITE" id="PS52031">
    <property type="entry name" value="GG_LECTIN"/>
    <property type="match status" value="1"/>
</dbReference>
<proteinExistence type="evidence at protein level"/>
<comment type="function">
    <text evidence="2">Structural component of the distal-half of the long-tail fiber. The long-tail fiber of T4 is about 1600 Angstroms long with a kink in the middle that divides the fiber into proximal and distal halves. The latter hinge is probably composed of gp35 protein.</text>
</comment>
<comment type="subunit">
    <text evidence="2">The long-tail fibers are trimeric, with a stoichiometry of gp34/gp37/gp36/gp35 of 3:3:3:1.</text>
</comment>
<comment type="subcellular location">
    <subcellularLocation>
        <location evidence="3">Virion</location>
    </subcellularLocation>
</comment>
<protein>
    <recommendedName>
        <fullName>Long-tail fiber protein gp35</fullName>
    </recommendedName>
    <alternativeName>
        <fullName evidence="3">Gene product 35</fullName>
        <shortName>gp35</shortName>
    </alternativeName>
</protein>
<sequence length="372" mass="40122">MEKFMAEFGQGYVQTPFLSESNSVRYKISIAGSCPLSTAGPSYVKFQDNPVGSQTFSAGLHLRVFDPSTGALVDSKSYAFSTSNDTTSAAFVSFMNSLTNNRIVAILTSGKVNFPPEVVSWLRTAGTSAFPSDSILSRFDVSYAAFYTSSKRAIALEHVKLSNRKSTDDYQTILDVVFDSLEDVGATGFPRGTYESVEQFMSAVGGTNDEIARLPTSAAISKLSDYNLIPGDVLYLKAQLYADADLLALGTTNISIRFYNASNGYISSTQAEFTGQAGSWELKEDYVVVPENAVGFTIYAQRTAQAGQGGMRNLSFSEVSRNGGISKPAEFGVNGIRVNYICESASPPDIMVLPTQASSKTGKVFGQEFREV</sequence>